<proteinExistence type="inferred from homology"/>
<organism>
    <name type="scientific">Shigella flexneri serotype 5b (strain 8401)</name>
    <dbReference type="NCBI Taxonomy" id="373384"/>
    <lineage>
        <taxon>Bacteria</taxon>
        <taxon>Pseudomonadati</taxon>
        <taxon>Pseudomonadota</taxon>
        <taxon>Gammaproteobacteria</taxon>
        <taxon>Enterobacterales</taxon>
        <taxon>Enterobacteriaceae</taxon>
        <taxon>Shigella</taxon>
    </lineage>
</organism>
<reference key="1">
    <citation type="journal article" date="2006" name="BMC Genomics">
        <title>Complete genome sequence of Shigella flexneri 5b and comparison with Shigella flexneri 2a.</title>
        <authorList>
            <person name="Nie H."/>
            <person name="Yang F."/>
            <person name="Zhang X."/>
            <person name="Yang J."/>
            <person name="Chen L."/>
            <person name="Wang J."/>
            <person name="Xiong Z."/>
            <person name="Peng J."/>
            <person name="Sun L."/>
            <person name="Dong J."/>
            <person name="Xue Y."/>
            <person name="Xu X."/>
            <person name="Chen S."/>
            <person name="Yao Z."/>
            <person name="Shen Y."/>
            <person name="Jin Q."/>
        </authorList>
    </citation>
    <scope>NUCLEOTIDE SEQUENCE [LARGE SCALE GENOMIC DNA]</scope>
    <source>
        <strain>8401</strain>
    </source>
</reference>
<dbReference type="EC" id="5.3.1.12" evidence="1"/>
<dbReference type="EMBL" id="CP000266">
    <property type="protein sequence ID" value="ABF05189.1"/>
    <property type="molecule type" value="Genomic_DNA"/>
</dbReference>
<dbReference type="RefSeq" id="WP_000187442.1">
    <property type="nucleotide sequence ID" value="NC_008258.1"/>
</dbReference>
<dbReference type="SMR" id="Q0T0H6"/>
<dbReference type="GeneID" id="93778895"/>
<dbReference type="KEGG" id="sfv:SFV_3133"/>
<dbReference type="HOGENOM" id="CLU_044465_1_0_6"/>
<dbReference type="UniPathway" id="UPA00246"/>
<dbReference type="Proteomes" id="UP000000659">
    <property type="component" value="Chromosome"/>
</dbReference>
<dbReference type="GO" id="GO:0008880">
    <property type="term" value="F:glucuronate isomerase activity"/>
    <property type="evidence" value="ECO:0007669"/>
    <property type="project" value="UniProtKB-UniRule"/>
</dbReference>
<dbReference type="GO" id="GO:0019698">
    <property type="term" value="P:D-galacturonate catabolic process"/>
    <property type="evidence" value="ECO:0007669"/>
    <property type="project" value="TreeGrafter"/>
</dbReference>
<dbReference type="GO" id="GO:0042840">
    <property type="term" value="P:D-glucuronate catabolic process"/>
    <property type="evidence" value="ECO:0007669"/>
    <property type="project" value="TreeGrafter"/>
</dbReference>
<dbReference type="FunFam" id="1.10.2020.10:FF:000001">
    <property type="entry name" value="Uronate isomerase"/>
    <property type="match status" value="1"/>
</dbReference>
<dbReference type="Gene3D" id="3.20.20.140">
    <property type="entry name" value="Metal-dependent hydrolases"/>
    <property type="match status" value="1"/>
</dbReference>
<dbReference type="Gene3D" id="1.10.2020.10">
    <property type="entry name" value="uronate isomerase, domain 2, chain A"/>
    <property type="match status" value="1"/>
</dbReference>
<dbReference type="HAMAP" id="MF_00675">
    <property type="entry name" value="UxaC"/>
    <property type="match status" value="1"/>
</dbReference>
<dbReference type="InterPro" id="IPR032466">
    <property type="entry name" value="Metal_Hydrolase"/>
</dbReference>
<dbReference type="InterPro" id="IPR003766">
    <property type="entry name" value="Uronate_isomerase"/>
</dbReference>
<dbReference type="NCBIfam" id="NF002794">
    <property type="entry name" value="PRK02925.1"/>
    <property type="match status" value="1"/>
</dbReference>
<dbReference type="PANTHER" id="PTHR30068">
    <property type="entry name" value="URONATE ISOMERASE"/>
    <property type="match status" value="1"/>
</dbReference>
<dbReference type="PANTHER" id="PTHR30068:SF4">
    <property type="entry name" value="URONATE ISOMERASE"/>
    <property type="match status" value="1"/>
</dbReference>
<dbReference type="Pfam" id="PF02614">
    <property type="entry name" value="UxaC"/>
    <property type="match status" value="1"/>
</dbReference>
<dbReference type="SUPFAM" id="SSF51556">
    <property type="entry name" value="Metallo-dependent hydrolases"/>
    <property type="match status" value="1"/>
</dbReference>
<name>UXAC_SHIF8</name>
<sequence length="470" mass="53987">MTPFMTEDFLLDTEFARRLYHDYAKDQPIFDYHCHLPPQQIAEDYRFKNLYDIWLKGDHYKWRAMRTNGVAERLCTGDASDREKFDAWAATVPHTIGNPLYHWTHLELRRPFGITGKLLSPSTADEIWNECNELLAQDNFSARGIMQQMNVKMVGTTDDPIDSLEHHAEIAKDGSFTIKVLPSWRPDKAFNIEQATFNDYMAKLGEVSDTDIRRFADLQTALTKRLDHFAAHGCKVSDHALDVVMFAEANEAELDSILARRLAGETLSEHEVAQFKTAVLVFLGAEYARRGWVQQYHIGALRNNNLRQFKLLGPDVGFDSINDRPMAEELSKLLSKQNEENLLPKTILYCLNPRDNEVLGTMIGNFQGEGMPGKMQFGSGWWFNDQKDGMERQMTQLAQLGLLSRFVGMLTDSRSFLSYTRHEYFRRILCQMIGRWVEAGEAPADINLLGEMVKNICFNNARDYFAIELN</sequence>
<comment type="catalytic activity">
    <reaction evidence="1">
        <text>D-glucuronate = D-fructuronate</text>
        <dbReference type="Rhea" id="RHEA:13049"/>
        <dbReference type="ChEBI" id="CHEBI:58720"/>
        <dbReference type="ChEBI" id="CHEBI:59863"/>
        <dbReference type="EC" id="5.3.1.12"/>
    </reaction>
</comment>
<comment type="catalytic activity">
    <reaction evidence="1">
        <text>aldehydo-D-galacturonate = keto-D-tagaturonate</text>
        <dbReference type="Rhea" id="RHEA:27702"/>
        <dbReference type="ChEBI" id="CHEBI:12952"/>
        <dbReference type="ChEBI" id="CHEBI:17886"/>
        <dbReference type="EC" id="5.3.1.12"/>
    </reaction>
</comment>
<comment type="pathway">
    <text evidence="1">Carbohydrate metabolism; pentose and glucuronate interconversion.</text>
</comment>
<comment type="similarity">
    <text evidence="1">Belongs to the metallo-dependent hydrolases superfamily. Uronate isomerase family.</text>
</comment>
<evidence type="ECO:0000255" key="1">
    <source>
        <dbReference type="HAMAP-Rule" id="MF_00675"/>
    </source>
</evidence>
<feature type="chain" id="PRO_1000044775" description="Uronate isomerase">
    <location>
        <begin position="1"/>
        <end position="470"/>
    </location>
</feature>
<keyword id="KW-0413">Isomerase</keyword>
<gene>
    <name evidence="1" type="primary">uxaC</name>
    <name type="ordered locus">SFV_3133</name>
</gene>
<accession>Q0T0H6</accession>
<protein>
    <recommendedName>
        <fullName evidence="1">Uronate isomerase</fullName>
        <ecNumber evidence="1">5.3.1.12</ecNumber>
    </recommendedName>
    <alternativeName>
        <fullName evidence="1">Glucuronate isomerase</fullName>
    </alternativeName>
    <alternativeName>
        <fullName evidence="1">Uronic isomerase</fullName>
    </alternativeName>
</protein>